<sequence length="375" mass="41960">MQCALYDAGRCRSCQWITQPIPEQLSAKTADLKNLLADFPVEEWCAPVSGPEQGFRNKAKMVVSGSVEKPLLGMLHRDGTPEDLCDCPLYPASFAPVFAALKPFIARAGLTPYNVARKRGELKYILLTESQSDGGMMLRFVLRSETKLAQLRKALPWLQAQLPQLKVITVNIQPVHMAIMEGETEIYLTEQQALVERFNDVPLWIRPQSFFQTNPAVASQLYATARDWVRQLPVKHMWDLFCGVGGFGLHCATPDMQLTGIEIALEAIACAKQSAAELGLTRLQFQALDSTQFATAQGEVPELVLVNPPRRGIGKPLCDYLSTMAPRFIIYSSCNAQTMAKDIRELPGYRIERVQLFDMFPHTAHYEVLTLLVKM</sequence>
<keyword id="KW-0004">4Fe-4S</keyword>
<keyword id="KW-0408">Iron</keyword>
<keyword id="KW-0411">Iron-sulfur</keyword>
<keyword id="KW-0479">Metal-binding</keyword>
<keyword id="KW-0489">Methyltransferase</keyword>
<keyword id="KW-1185">Reference proteome</keyword>
<keyword id="KW-0698">rRNA processing</keyword>
<keyword id="KW-0949">S-adenosyl-L-methionine</keyword>
<keyword id="KW-0808">Transferase</keyword>
<evidence type="ECO:0000255" key="1">
    <source>
        <dbReference type="HAMAP-Rule" id="MF_01012"/>
    </source>
</evidence>
<organism>
    <name type="scientific">Escherichia coli O157:H7</name>
    <dbReference type="NCBI Taxonomy" id="83334"/>
    <lineage>
        <taxon>Bacteria</taxon>
        <taxon>Pseudomonadati</taxon>
        <taxon>Pseudomonadota</taxon>
        <taxon>Gammaproteobacteria</taxon>
        <taxon>Enterobacterales</taxon>
        <taxon>Enterobacteriaceae</taxon>
        <taxon>Escherichia</taxon>
    </lineage>
</organism>
<dbReference type="EC" id="2.1.1.189" evidence="1"/>
<dbReference type="EMBL" id="AE005174">
    <property type="protein sequence ID" value="AAG55235.1"/>
    <property type="molecule type" value="Genomic_DNA"/>
</dbReference>
<dbReference type="EMBL" id="BA000007">
    <property type="protein sequence ID" value="BAB34362.1"/>
    <property type="molecule type" value="Genomic_DNA"/>
</dbReference>
<dbReference type="PIR" id="C90746">
    <property type="entry name" value="C90746"/>
</dbReference>
<dbReference type="PIR" id="G85596">
    <property type="entry name" value="G85596"/>
</dbReference>
<dbReference type="RefSeq" id="NP_308966.1">
    <property type="nucleotide sequence ID" value="NC_002695.1"/>
</dbReference>
<dbReference type="RefSeq" id="WP_001149719.1">
    <property type="nucleotide sequence ID" value="NZ_VOAI01000006.1"/>
</dbReference>
<dbReference type="SMR" id="Q8X6Q5"/>
<dbReference type="STRING" id="155864.Z1086"/>
<dbReference type="GeneID" id="917679"/>
<dbReference type="KEGG" id="ece:Z1086"/>
<dbReference type="KEGG" id="ecs:ECs_0939"/>
<dbReference type="PATRIC" id="fig|386585.9.peg.1057"/>
<dbReference type="eggNOG" id="COG2265">
    <property type="taxonomic scope" value="Bacteria"/>
</dbReference>
<dbReference type="HOGENOM" id="CLU_014689_0_0_6"/>
<dbReference type="OMA" id="SCQWLEK"/>
<dbReference type="Proteomes" id="UP000000558">
    <property type="component" value="Chromosome"/>
</dbReference>
<dbReference type="Proteomes" id="UP000002519">
    <property type="component" value="Chromosome"/>
</dbReference>
<dbReference type="GO" id="GO:0051539">
    <property type="term" value="F:4 iron, 4 sulfur cluster binding"/>
    <property type="evidence" value="ECO:0007669"/>
    <property type="project" value="UniProtKB-KW"/>
</dbReference>
<dbReference type="GO" id="GO:0005506">
    <property type="term" value="F:iron ion binding"/>
    <property type="evidence" value="ECO:0007669"/>
    <property type="project" value="UniProtKB-UniRule"/>
</dbReference>
<dbReference type="GO" id="GO:0070041">
    <property type="term" value="F:rRNA (uridine-C5-)-methyltransferase activity"/>
    <property type="evidence" value="ECO:0007669"/>
    <property type="project" value="UniProtKB-UniRule"/>
</dbReference>
<dbReference type="GO" id="GO:0070475">
    <property type="term" value="P:rRNA base methylation"/>
    <property type="evidence" value="ECO:0007669"/>
    <property type="project" value="TreeGrafter"/>
</dbReference>
<dbReference type="CDD" id="cd02440">
    <property type="entry name" value="AdoMet_MTases"/>
    <property type="match status" value="1"/>
</dbReference>
<dbReference type="FunFam" id="2.40.50.1070:FF:000002">
    <property type="entry name" value="23S rRNA (uracil(747)-C(5))-methyltransferase RlmC"/>
    <property type="match status" value="1"/>
</dbReference>
<dbReference type="FunFam" id="3.40.50.150:FF:000049">
    <property type="entry name" value="23S rRNA (uracil(747)-C(5))-methyltransferase RlmC"/>
    <property type="match status" value="1"/>
</dbReference>
<dbReference type="Gene3D" id="2.40.50.1070">
    <property type="match status" value="1"/>
</dbReference>
<dbReference type="Gene3D" id="3.40.50.150">
    <property type="entry name" value="Vaccinia Virus protein VP39"/>
    <property type="match status" value="1"/>
</dbReference>
<dbReference type="HAMAP" id="MF_01012">
    <property type="entry name" value="23SrRNA_methyltr_RlmC"/>
    <property type="match status" value="1"/>
</dbReference>
<dbReference type="InterPro" id="IPR011825">
    <property type="entry name" value="23SrRNA_MeTrfase_RlmC"/>
</dbReference>
<dbReference type="InterPro" id="IPR030390">
    <property type="entry name" value="MeTrfase_TrmA_AS"/>
</dbReference>
<dbReference type="InterPro" id="IPR030391">
    <property type="entry name" value="MeTrfase_TrmA_CS"/>
</dbReference>
<dbReference type="InterPro" id="IPR029063">
    <property type="entry name" value="SAM-dependent_MTases_sf"/>
</dbReference>
<dbReference type="InterPro" id="IPR010280">
    <property type="entry name" value="U5_MeTrfase_fam"/>
</dbReference>
<dbReference type="NCBIfam" id="TIGR02085">
    <property type="entry name" value="meth_trns_rumB"/>
    <property type="match status" value="1"/>
</dbReference>
<dbReference type="PANTHER" id="PTHR11061">
    <property type="entry name" value="RNA M5U METHYLTRANSFERASE"/>
    <property type="match status" value="1"/>
</dbReference>
<dbReference type="PANTHER" id="PTHR11061:SF30">
    <property type="entry name" value="TRNA (URACIL(54)-C(5))-METHYLTRANSFERASE"/>
    <property type="match status" value="1"/>
</dbReference>
<dbReference type="Pfam" id="PF05958">
    <property type="entry name" value="tRNA_U5-meth_tr"/>
    <property type="match status" value="1"/>
</dbReference>
<dbReference type="SUPFAM" id="SSF53335">
    <property type="entry name" value="S-adenosyl-L-methionine-dependent methyltransferases"/>
    <property type="match status" value="1"/>
</dbReference>
<dbReference type="PROSITE" id="PS51687">
    <property type="entry name" value="SAM_MT_RNA_M5U"/>
    <property type="match status" value="1"/>
</dbReference>
<dbReference type="PROSITE" id="PS01230">
    <property type="entry name" value="TRMA_1"/>
    <property type="match status" value="1"/>
</dbReference>
<dbReference type="PROSITE" id="PS01231">
    <property type="entry name" value="TRMA_2"/>
    <property type="match status" value="1"/>
</dbReference>
<proteinExistence type="inferred from homology"/>
<name>RLMC_ECO57</name>
<protein>
    <recommendedName>
        <fullName evidence="1">23S rRNA (uracil(747)-C(5))-methyltransferase RlmC</fullName>
        <ecNumber evidence="1">2.1.1.189</ecNumber>
    </recommendedName>
    <alternativeName>
        <fullName evidence="1">23S rRNA(m5U747)-methyltransferase</fullName>
    </alternativeName>
</protein>
<comment type="function">
    <text evidence="1">Catalyzes the formation of 5-methyl-uridine at position 747 (m5U747) in 23S rRNA.</text>
</comment>
<comment type="catalytic activity">
    <reaction evidence="1">
        <text>uridine(747) in 23S rRNA + S-adenosyl-L-methionine = 5-methyluridine(747) in 23S rRNA + S-adenosyl-L-homocysteine + H(+)</text>
        <dbReference type="Rhea" id="RHEA:42628"/>
        <dbReference type="Rhea" id="RHEA-COMP:10154"/>
        <dbReference type="Rhea" id="RHEA-COMP:10155"/>
        <dbReference type="ChEBI" id="CHEBI:15378"/>
        <dbReference type="ChEBI" id="CHEBI:57856"/>
        <dbReference type="ChEBI" id="CHEBI:59789"/>
        <dbReference type="ChEBI" id="CHEBI:65315"/>
        <dbReference type="ChEBI" id="CHEBI:74447"/>
        <dbReference type="EC" id="2.1.1.189"/>
    </reaction>
</comment>
<comment type="similarity">
    <text evidence="1">Belongs to the class I-like SAM-binding methyltransferase superfamily. RNA M5U methyltransferase family. RlmC subfamily.</text>
</comment>
<accession>Q8X6Q5</accession>
<gene>
    <name evidence="1" type="primary">rlmC</name>
    <name type="synonym">rumB</name>
    <name type="ordered locus">Z1086</name>
    <name type="ordered locus">ECs0939</name>
</gene>
<reference key="1">
    <citation type="journal article" date="2001" name="Nature">
        <title>Genome sequence of enterohaemorrhagic Escherichia coli O157:H7.</title>
        <authorList>
            <person name="Perna N.T."/>
            <person name="Plunkett G. III"/>
            <person name="Burland V."/>
            <person name="Mau B."/>
            <person name="Glasner J.D."/>
            <person name="Rose D.J."/>
            <person name="Mayhew G.F."/>
            <person name="Evans P.S."/>
            <person name="Gregor J."/>
            <person name="Kirkpatrick H.A."/>
            <person name="Posfai G."/>
            <person name="Hackett J."/>
            <person name="Klink S."/>
            <person name="Boutin A."/>
            <person name="Shao Y."/>
            <person name="Miller L."/>
            <person name="Grotbeck E.J."/>
            <person name="Davis N.W."/>
            <person name="Lim A."/>
            <person name="Dimalanta E.T."/>
            <person name="Potamousis K."/>
            <person name="Apodaca J."/>
            <person name="Anantharaman T.S."/>
            <person name="Lin J."/>
            <person name="Yen G."/>
            <person name="Schwartz D.C."/>
            <person name="Welch R.A."/>
            <person name="Blattner F.R."/>
        </authorList>
    </citation>
    <scope>NUCLEOTIDE SEQUENCE [LARGE SCALE GENOMIC DNA]</scope>
    <source>
        <strain>O157:H7 / EDL933 / ATCC 700927 / EHEC</strain>
    </source>
</reference>
<reference key="2">
    <citation type="journal article" date="2001" name="DNA Res.">
        <title>Complete genome sequence of enterohemorrhagic Escherichia coli O157:H7 and genomic comparison with a laboratory strain K-12.</title>
        <authorList>
            <person name="Hayashi T."/>
            <person name="Makino K."/>
            <person name="Ohnishi M."/>
            <person name="Kurokawa K."/>
            <person name="Ishii K."/>
            <person name="Yokoyama K."/>
            <person name="Han C.-G."/>
            <person name="Ohtsubo E."/>
            <person name="Nakayama K."/>
            <person name="Murata T."/>
            <person name="Tanaka M."/>
            <person name="Tobe T."/>
            <person name="Iida T."/>
            <person name="Takami H."/>
            <person name="Honda T."/>
            <person name="Sasakawa C."/>
            <person name="Ogasawara N."/>
            <person name="Yasunaga T."/>
            <person name="Kuhara S."/>
            <person name="Shiba T."/>
            <person name="Hattori M."/>
            <person name="Shinagawa H."/>
        </authorList>
    </citation>
    <scope>NUCLEOTIDE SEQUENCE [LARGE SCALE GENOMIC DNA]</scope>
    <source>
        <strain>O157:H7 / Sakai / RIMD 0509952 / EHEC</strain>
    </source>
</reference>
<feature type="chain" id="PRO_0000161927" description="23S rRNA (uracil(747)-C(5))-methyltransferase RlmC">
    <location>
        <begin position="1"/>
        <end position="375"/>
    </location>
</feature>
<feature type="active site" description="Nucleophile" evidence="1">
    <location>
        <position position="334"/>
    </location>
</feature>
<feature type="binding site" evidence="1">
    <location>
        <position position="3"/>
    </location>
    <ligand>
        <name>[4Fe-4S] cluster</name>
        <dbReference type="ChEBI" id="CHEBI:49883"/>
    </ligand>
</feature>
<feature type="binding site" evidence="1">
    <location>
        <position position="11"/>
    </location>
    <ligand>
        <name>[4Fe-4S] cluster</name>
        <dbReference type="ChEBI" id="CHEBI:49883"/>
    </ligand>
</feature>
<feature type="binding site" evidence="1">
    <location>
        <position position="14"/>
    </location>
    <ligand>
        <name>[4Fe-4S] cluster</name>
        <dbReference type="ChEBI" id="CHEBI:49883"/>
    </ligand>
</feature>
<feature type="binding site" evidence="1">
    <location>
        <position position="87"/>
    </location>
    <ligand>
        <name>[4Fe-4S] cluster</name>
        <dbReference type="ChEBI" id="CHEBI:49883"/>
    </ligand>
</feature>
<feature type="binding site" evidence="1">
    <location>
        <position position="212"/>
    </location>
    <ligand>
        <name>S-adenosyl-L-methionine</name>
        <dbReference type="ChEBI" id="CHEBI:59789"/>
    </ligand>
</feature>
<feature type="binding site" evidence="1">
    <location>
        <position position="241"/>
    </location>
    <ligand>
        <name>S-adenosyl-L-methionine</name>
        <dbReference type="ChEBI" id="CHEBI:59789"/>
    </ligand>
</feature>
<feature type="binding site" evidence="1">
    <location>
        <position position="262"/>
    </location>
    <ligand>
        <name>S-adenosyl-L-methionine</name>
        <dbReference type="ChEBI" id="CHEBI:59789"/>
    </ligand>
</feature>
<feature type="binding site" evidence="1">
    <location>
        <position position="307"/>
    </location>
    <ligand>
        <name>S-adenosyl-L-methionine</name>
        <dbReference type="ChEBI" id="CHEBI:59789"/>
    </ligand>
</feature>